<accession>A3Q6Y3</accession>
<keyword id="KW-0067">ATP-binding</keyword>
<keyword id="KW-0173">Coenzyme A biosynthesis</keyword>
<keyword id="KW-0963">Cytoplasm</keyword>
<keyword id="KW-0418">Kinase</keyword>
<keyword id="KW-0479">Metal-binding</keyword>
<keyword id="KW-0547">Nucleotide-binding</keyword>
<keyword id="KW-0630">Potassium</keyword>
<keyword id="KW-0808">Transferase</keyword>
<sequence length="267" mass="28471">MLLAIDVRNTHTTVGLISGSGDHAKVVQQWRIRTESEATADELALTIDGLIGEDSERLTGAVGLSTVPSVLHEVRLMLEQYWPSVPHVMIEPGVRTGIPLLVDNPKEVGADRIVNCLAAYHRFGTAAIVVDFGSSICVDVVSAKGEFLGGAIAPGVQVSSDAAAARSAALRRVELTRPRSVIGKNTVECMQSGALFGFAGLVDGLVNRIREDVAGFSGTDVAVVATGHTAPLVLPDVHTVAHYDRHLTLDGLRLVFERNRDGQRGRR</sequence>
<gene>
    <name evidence="1" type="primary">coaX</name>
    <name type="ordered locus">Mjls_5146</name>
</gene>
<protein>
    <recommendedName>
        <fullName evidence="1">Type III pantothenate kinase</fullName>
        <ecNumber evidence="1">2.7.1.33</ecNumber>
    </recommendedName>
    <alternativeName>
        <fullName evidence="1">PanK-III</fullName>
    </alternativeName>
    <alternativeName>
        <fullName evidence="1">Pantothenic acid kinase</fullName>
    </alternativeName>
</protein>
<dbReference type="EC" id="2.7.1.33" evidence="1"/>
<dbReference type="EMBL" id="CP000580">
    <property type="protein sequence ID" value="ABO00911.1"/>
    <property type="molecule type" value="Genomic_DNA"/>
</dbReference>
<dbReference type="SMR" id="A3Q6Y3"/>
<dbReference type="KEGG" id="mjl:Mjls_5146"/>
<dbReference type="HOGENOM" id="CLU_066627_1_0_11"/>
<dbReference type="BioCyc" id="MSP164757:G1G8C-5196-MONOMER"/>
<dbReference type="UniPathway" id="UPA00241">
    <property type="reaction ID" value="UER00352"/>
</dbReference>
<dbReference type="GO" id="GO:0005737">
    <property type="term" value="C:cytoplasm"/>
    <property type="evidence" value="ECO:0007669"/>
    <property type="project" value="UniProtKB-SubCell"/>
</dbReference>
<dbReference type="GO" id="GO:0005524">
    <property type="term" value="F:ATP binding"/>
    <property type="evidence" value="ECO:0007669"/>
    <property type="project" value="UniProtKB-UniRule"/>
</dbReference>
<dbReference type="GO" id="GO:0046872">
    <property type="term" value="F:metal ion binding"/>
    <property type="evidence" value="ECO:0007669"/>
    <property type="project" value="UniProtKB-KW"/>
</dbReference>
<dbReference type="GO" id="GO:0004594">
    <property type="term" value="F:pantothenate kinase activity"/>
    <property type="evidence" value="ECO:0007669"/>
    <property type="project" value="UniProtKB-UniRule"/>
</dbReference>
<dbReference type="GO" id="GO:0015937">
    <property type="term" value="P:coenzyme A biosynthetic process"/>
    <property type="evidence" value="ECO:0007669"/>
    <property type="project" value="UniProtKB-UniRule"/>
</dbReference>
<dbReference type="CDD" id="cd24015">
    <property type="entry name" value="ASKHA_NBD_PanK-III"/>
    <property type="match status" value="1"/>
</dbReference>
<dbReference type="Gene3D" id="3.30.420.40">
    <property type="match status" value="2"/>
</dbReference>
<dbReference type="HAMAP" id="MF_01274">
    <property type="entry name" value="Pantothen_kinase_3"/>
    <property type="match status" value="1"/>
</dbReference>
<dbReference type="InterPro" id="IPR043129">
    <property type="entry name" value="ATPase_NBD"/>
</dbReference>
<dbReference type="InterPro" id="IPR004619">
    <property type="entry name" value="Type_III_PanK"/>
</dbReference>
<dbReference type="NCBIfam" id="TIGR00671">
    <property type="entry name" value="baf"/>
    <property type="match status" value="1"/>
</dbReference>
<dbReference type="NCBIfam" id="NF009845">
    <property type="entry name" value="PRK13318.1-3"/>
    <property type="match status" value="1"/>
</dbReference>
<dbReference type="PANTHER" id="PTHR34265">
    <property type="entry name" value="TYPE III PANTOTHENATE KINASE"/>
    <property type="match status" value="1"/>
</dbReference>
<dbReference type="PANTHER" id="PTHR34265:SF1">
    <property type="entry name" value="TYPE III PANTOTHENATE KINASE"/>
    <property type="match status" value="1"/>
</dbReference>
<dbReference type="Pfam" id="PF03309">
    <property type="entry name" value="Pan_kinase"/>
    <property type="match status" value="1"/>
</dbReference>
<dbReference type="SUPFAM" id="SSF53067">
    <property type="entry name" value="Actin-like ATPase domain"/>
    <property type="match status" value="2"/>
</dbReference>
<reference key="1">
    <citation type="submission" date="2007-02" db="EMBL/GenBank/DDBJ databases">
        <title>Complete sequence of Mycobacterium sp. JLS.</title>
        <authorList>
            <consortium name="US DOE Joint Genome Institute"/>
            <person name="Copeland A."/>
            <person name="Lucas S."/>
            <person name="Lapidus A."/>
            <person name="Barry K."/>
            <person name="Detter J.C."/>
            <person name="Glavina del Rio T."/>
            <person name="Hammon N."/>
            <person name="Israni S."/>
            <person name="Dalin E."/>
            <person name="Tice H."/>
            <person name="Pitluck S."/>
            <person name="Chain P."/>
            <person name="Malfatti S."/>
            <person name="Shin M."/>
            <person name="Vergez L."/>
            <person name="Schmutz J."/>
            <person name="Larimer F."/>
            <person name="Land M."/>
            <person name="Hauser L."/>
            <person name="Kyrpides N."/>
            <person name="Mikhailova N."/>
            <person name="Miller C.D."/>
            <person name="Anderson A.J."/>
            <person name="Sims R.C."/>
            <person name="Richardson P."/>
        </authorList>
    </citation>
    <scope>NUCLEOTIDE SEQUENCE [LARGE SCALE GENOMIC DNA]</scope>
    <source>
        <strain>JLS</strain>
    </source>
</reference>
<organism>
    <name type="scientific">Mycobacterium sp. (strain JLS)</name>
    <dbReference type="NCBI Taxonomy" id="164757"/>
    <lineage>
        <taxon>Bacteria</taxon>
        <taxon>Bacillati</taxon>
        <taxon>Actinomycetota</taxon>
        <taxon>Actinomycetes</taxon>
        <taxon>Mycobacteriales</taxon>
        <taxon>Mycobacteriaceae</taxon>
        <taxon>Mycobacterium</taxon>
    </lineage>
</organism>
<proteinExistence type="inferred from homology"/>
<comment type="function">
    <text evidence="1">Catalyzes the phosphorylation of pantothenate (Pan), the first step in CoA biosynthesis.</text>
</comment>
<comment type="catalytic activity">
    <reaction evidence="1">
        <text>(R)-pantothenate + ATP = (R)-4'-phosphopantothenate + ADP + H(+)</text>
        <dbReference type="Rhea" id="RHEA:16373"/>
        <dbReference type="ChEBI" id="CHEBI:10986"/>
        <dbReference type="ChEBI" id="CHEBI:15378"/>
        <dbReference type="ChEBI" id="CHEBI:29032"/>
        <dbReference type="ChEBI" id="CHEBI:30616"/>
        <dbReference type="ChEBI" id="CHEBI:456216"/>
        <dbReference type="EC" id="2.7.1.33"/>
    </reaction>
</comment>
<comment type="cofactor">
    <cofactor evidence="1">
        <name>NH4(+)</name>
        <dbReference type="ChEBI" id="CHEBI:28938"/>
    </cofactor>
    <cofactor evidence="1">
        <name>K(+)</name>
        <dbReference type="ChEBI" id="CHEBI:29103"/>
    </cofactor>
    <text evidence="1">A monovalent cation. Ammonium or potassium.</text>
</comment>
<comment type="pathway">
    <text evidence="1">Cofactor biosynthesis; coenzyme A biosynthesis; CoA from (R)-pantothenate: step 1/5.</text>
</comment>
<comment type="subunit">
    <text evidence="1">Homodimer.</text>
</comment>
<comment type="subcellular location">
    <subcellularLocation>
        <location evidence="1">Cytoplasm</location>
    </subcellularLocation>
</comment>
<comment type="similarity">
    <text evidence="1">Belongs to the type III pantothenate kinase family.</text>
</comment>
<name>COAX_MYCSJ</name>
<evidence type="ECO:0000255" key="1">
    <source>
        <dbReference type="HAMAP-Rule" id="MF_01274"/>
    </source>
</evidence>
<feature type="chain" id="PRO_1000054392" description="Type III pantothenate kinase">
    <location>
        <begin position="1"/>
        <end position="267"/>
    </location>
</feature>
<feature type="active site" description="Proton acceptor" evidence="1">
    <location>
        <position position="111"/>
    </location>
</feature>
<feature type="binding site" evidence="1">
    <location>
        <begin position="6"/>
        <end position="13"/>
    </location>
    <ligand>
        <name>ATP</name>
        <dbReference type="ChEBI" id="CHEBI:30616"/>
    </ligand>
</feature>
<feature type="binding site" evidence="1">
    <location>
        <begin position="109"/>
        <end position="112"/>
    </location>
    <ligand>
        <name>substrate</name>
    </ligand>
</feature>
<feature type="binding site" evidence="1">
    <location>
        <position position="131"/>
    </location>
    <ligand>
        <name>K(+)</name>
        <dbReference type="ChEBI" id="CHEBI:29103"/>
    </ligand>
</feature>
<feature type="binding site" evidence="1">
    <location>
        <position position="134"/>
    </location>
    <ligand>
        <name>ATP</name>
        <dbReference type="ChEBI" id="CHEBI:30616"/>
    </ligand>
</feature>
<feature type="binding site" evidence="1">
    <location>
        <position position="186"/>
    </location>
    <ligand>
        <name>substrate</name>
    </ligand>
</feature>